<organism>
    <name type="scientific">Platanus occidentalis</name>
    <name type="common">Sycamore</name>
    <name type="synonym">American plane tree</name>
    <dbReference type="NCBI Taxonomy" id="4403"/>
    <lineage>
        <taxon>Eukaryota</taxon>
        <taxon>Viridiplantae</taxon>
        <taxon>Streptophyta</taxon>
        <taxon>Embryophyta</taxon>
        <taxon>Tracheophyta</taxon>
        <taxon>Spermatophyta</taxon>
        <taxon>Magnoliopsida</taxon>
        <taxon>Proteales</taxon>
        <taxon>Platanaceae</taxon>
        <taxon>Platanus</taxon>
    </lineage>
</organism>
<sequence length="138" mass="14908">MAKPIQRIGSRRNGPIGSRKNGRRIPKGVIHVQASFNNTIVTVTDVRGRVVSWSSAGACGFRGTRRGTPFAAQTAAGNAIRTVVDQGMQRAEVMIKGPGLGRDAALRAIRRSGILLSFVRDVTPMPHNGCRPPKKRRV</sequence>
<keyword id="KW-0150">Chloroplast</keyword>
<keyword id="KW-0934">Plastid</keyword>
<keyword id="KW-0687">Ribonucleoprotein</keyword>
<keyword id="KW-0689">Ribosomal protein</keyword>
<keyword id="KW-0694">RNA-binding</keyword>
<keyword id="KW-0699">rRNA-binding</keyword>
<evidence type="ECO:0000255" key="1">
    <source>
        <dbReference type="HAMAP-Rule" id="MF_01310"/>
    </source>
</evidence>
<evidence type="ECO:0000256" key="2">
    <source>
        <dbReference type="SAM" id="MobiDB-lite"/>
    </source>
</evidence>
<evidence type="ECO:0000305" key="3"/>
<accession>Q09G13</accession>
<gene>
    <name evidence="1" type="primary">rps11</name>
</gene>
<geneLocation type="chloroplast"/>
<proteinExistence type="inferred from homology"/>
<reference key="1">
    <citation type="journal article" date="2006" name="BMC Plant Biol.">
        <title>Rapid and accurate pyrosequencing of angiosperm plastid genomes.</title>
        <authorList>
            <person name="Moore M.J."/>
            <person name="Dhingra A."/>
            <person name="Soltis P.S."/>
            <person name="Shaw R."/>
            <person name="Farmerie W.G."/>
            <person name="Folta K.M."/>
            <person name="Soltis D.E."/>
        </authorList>
    </citation>
    <scope>NUCLEOTIDE SEQUENCE [LARGE SCALE GENOMIC DNA]</scope>
</reference>
<name>RR11_PLAOC</name>
<protein>
    <recommendedName>
        <fullName evidence="1">Small ribosomal subunit protein uS11c</fullName>
    </recommendedName>
    <alternativeName>
        <fullName evidence="3">30S ribosomal protein S11, chloroplastic</fullName>
    </alternativeName>
</protein>
<feature type="chain" id="PRO_0000294925" description="Small ribosomal subunit protein uS11c">
    <location>
        <begin position="1"/>
        <end position="138"/>
    </location>
</feature>
<feature type="region of interest" description="Disordered" evidence="2">
    <location>
        <begin position="1"/>
        <end position="23"/>
    </location>
</feature>
<dbReference type="EMBL" id="DQ923116">
    <property type="protein sequence ID" value="ABI49812.1"/>
    <property type="molecule type" value="Genomic_DNA"/>
</dbReference>
<dbReference type="RefSeq" id="YP_740598.1">
    <property type="nucleotide sequence ID" value="NC_008335.1"/>
</dbReference>
<dbReference type="SMR" id="Q09G13"/>
<dbReference type="GeneID" id="4271273"/>
<dbReference type="GO" id="GO:0009507">
    <property type="term" value="C:chloroplast"/>
    <property type="evidence" value="ECO:0007669"/>
    <property type="project" value="UniProtKB-SubCell"/>
</dbReference>
<dbReference type="GO" id="GO:1990904">
    <property type="term" value="C:ribonucleoprotein complex"/>
    <property type="evidence" value="ECO:0007669"/>
    <property type="project" value="UniProtKB-KW"/>
</dbReference>
<dbReference type="GO" id="GO:0005840">
    <property type="term" value="C:ribosome"/>
    <property type="evidence" value="ECO:0007669"/>
    <property type="project" value="UniProtKB-KW"/>
</dbReference>
<dbReference type="GO" id="GO:0019843">
    <property type="term" value="F:rRNA binding"/>
    <property type="evidence" value="ECO:0007669"/>
    <property type="project" value="UniProtKB-UniRule"/>
</dbReference>
<dbReference type="GO" id="GO:0003735">
    <property type="term" value="F:structural constituent of ribosome"/>
    <property type="evidence" value="ECO:0007669"/>
    <property type="project" value="InterPro"/>
</dbReference>
<dbReference type="GO" id="GO:0006412">
    <property type="term" value="P:translation"/>
    <property type="evidence" value="ECO:0007669"/>
    <property type="project" value="UniProtKB-UniRule"/>
</dbReference>
<dbReference type="FunFam" id="3.30.420.80:FF:000003">
    <property type="entry name" value="30S ribosomal protein S11, chloroplastic"/>
    <property type="match status" value="1"/>
</dbReference>
<dbReference type="Gene3D" id="3.30.420.80">
    <property type="entry name" value="Ribosomal protein S11"/>
    <property type="match status" value="1"/>
</dbReference>
<dbReference type="HAMAP" id="MF_01310">
    <property type="entry name" value="Ribosomal_uS11"/>
    <property type="match status" value="1"/>
</dbReference>
<dbReference type="InterPro" id="IPR001971">
    <property type="entry name" value="Ribosomal_uS11"/>
</dbReference>
<dbReference type="InterPro" id="IPR019981">
    <property type="entry name" value="Ribosomal_uS11_bac-type"/>
</dbReference>
<dbReference type="InterPro" id="IPR018102">
    <property type="entry name" value="Ribosomal_uS11_CS"/>
</dbReference>
<dbReference type="InterPro" id="IPR036967">
    <property type="entry name" value="Ribosomal_uS11_sf"/>
</dbReference>
<dbReference type="NCBIfam" id="NF003698">
    <property type="entry name" value="PRK05309.1"/>
    <property type="match status" value="1"/>
</dbReference>
<dbReference type="NCBIfam" id="TIGR03632">
    <property type="entry name" value="uS11_bact"/>
    <property type="match status" value="1"/>
</dbReference>
<dbReference type="PANTHER" id="PTHR11759">
    <property type="entry name" value="40S RIBOSOMAL PROTEIN S14/30S RIBOSOMAL PROTEIN S11"/>
    <property type="match status" value="1"/>
</dbReference>
<dbReference type="Pfam" id="PF00411">
    <property type="entry name" value="Ribosomal_S11"/>
    <property type="match status" value="1"/>
</dbReference>
<dbReference type="PIRSF" id="PIRSF002131">
    <property type="entry name" value="Ribosomal_S11"/>
    <property type="match status" value="1"/>
</dbReference>
<dbReference type="SUPFAM" id="SSF53137">
    <property type="entry name" value="Translational machinery components"/>
    <property type="match status" value="1"/>
</dbReference>
<dbReference type="PROSITE" id="PS00054">
    <property type="entry name" value="RIBOSOMAL_S11"/>
    <property type="match status" value="1"/>
</dbReference>
<comment type="subunit">
    <text evidence="1">Part of the 30S ribosomal subunit.</text>
</comment>
<comment type="subcellular location">
    <subcellularLocation>
        <location>Plastid</location>
        <location>Chloroplast</location>
    </subcellularLocation>
</comment>
<comment type="similarity">
    <text evidence="1">Belongs to the universal ribosomal protein uS11 family.</text>
</comment>